<feature type="signal peptide" evidence="3">
    <location>
        <begin position="1"/>
        <end position="21"/>
    </location>
</feature>
<feature type="chain" id="PRO_0000376811" description="Trefoil factor 3">
    <location>
        <begin position="22"/>
        <end position="80"/>
    </location>
</feature>
<feature type="domain" description="P-type" evidence="4">
    <location>
        <begin position="30"/>
        <end position="73"/>
    </location>
</feature>
<feature type="disulfide bond" evidence="4">
    <location>
        <begin position="32"/>
        <end position="58"/>
    </location>
</feature>
<feature type="disulfide bond" evidence="4">
    <location>
        <begin position="42"/>
        <end position="57"/>
    </location>
</feature>
<feature type="disulfide bond" evidence="4">
    <location>
        <begin position="52"/>
        <end position="69"/>
    </location>
</feature>
<feature type="disulfide bond" description="Interchain" evidence="4">
    <location>
        <position position="78"/>
    </location>
</feature>
<sequence length="80" mass="8752">MEARMFWLLVVLLALASSSSAGEYVGLSANQCAVPAKDRVDCGYPQVTPEQCNNRGCCFDSSIXGVPWCFKPLQETECTF</sequence>
<protein>
    <recommendedName>
        <fullName>Trefoil factor 3</fullName>
    </recommendedName>
    <alternativeName>
        <fullName>Intestinal trefoil factor</fullName>
    </alternativeName>
</protein>
<reference key="1">
    <citation type="journal article" date="1996" name="Mamm. Genome">
        <title>Evaluation and characterization of a porcine small intestine cDNA library: analysis of 839 clones.</title>
        <authorList>
            <person name="Winteroe A.K."/>
            <person name="Fredholm M."/>
            <person name="Davies W."/>
        </authorList>
    </citation>
    <scope>NUCLEOTIDE SEQUENCE [LARGE SCALE MRNA]</scope>
    <source>
        <tissue>Small intestine</tissue>
    </source>
</reference>
<organism>
    <name type="scientific">Sus scrofa</name>
    <name type="common">Pig</name>
    <dbReference type="NCBI Taxonomy" id="9823"/>
    <lineage>
        <taxon>Eukaryota</taxon>
        <taxon>Metazoa</taxon>
        <taxon>Chordata</taxon>
        <taxon>Craniata</taxon>
        <taxon>Vertebrata</taxon>
        <taxon>Euteleostomi</taxon>
        <taxon>Mammalia</taxon>
        <taxon>Eutheria</taxon>
        <taxon>Laurasiatheria</taxon>
        <taxon>Artiodactyla</taxon>
        <taxon>Suina</taxon>
        <taxon>Suidae</taxon>
        <taxon>Sus</taxon>
    </lineage>
</organism>
<dbReference type="EMBL" id="F14493">
    <property type="protein sequence ID" value="CAA23086.1"/>
    <property type="molecule type" value="mRNA"/>
</dbReference>
<dbReference type="FunCoup" id="Q29183">
    <property type="interactions" value="87"/>
</dbReference>
<dbReference type="STRING" id="9823.ENSSSCP00000024677"/>
<dbReference type="PaxDb" id="9823-ENSSSCP00000024677"/>
<dbReference type="PeptideAtlas" id="Q29183"/>
<dbReference type="eggNOG" id="ENOG502SV7V">
    <property type="taxonomic scope" value="Eukaryota"/>
</dbReference>
<dbReference type="InParanoid" id="Q29183"/>
<dbReference type="Proteomes" id="UP000008227">
    <property type="component" value="Unplaced"/>
</dbReference>
<dbReference type="Proteomes" id="UP000314985">
    <property type="component" value="Unplaced"/>
</dbReference>
<dbReference type="Proteomes" id="UP000694570">
    <property type="component" value="Unplaced"/>
</dbReference>
<dbReference type="Proteomes" id="UP000694571">
    <property type="component" value="Unplaced"/>
</dbReference>
<dbReference type="Proteomes" id="UP000694720">
    <property type="component" value="Unplaced"/>
</dbReference>
<dbReference type="Proteomes" id="UP000694722">
    <property type="component" value="Unplaced"/>
</dbReference>
<dbReference type="Proteomes" id="UP000694723">
    <property type="component" value="Unplaced"/>
</dbReference>
<dbReference type="Proteomes" id="UP000694724">
    <property type="component" value="Unplaced"/>
</dbReference>
<dbReference type="Proteomes" id="UP000694725">
    <property type="component" value="Unplaced"/>
</dbReference>
<dbReference type="Proteomes" id="UP000694726">
    <property type="component" value="Unplaced"/>
</dbReference>
<dbReference type="Proteomes" id="UP000694727">
    <property type="component" value="Unplaced"/>
</dbReference>
<dbReference type="Proteomes" id="UP000694728">
    <property type="component" value="Unplaced"/>
</dbReference>
<dbReference type="GO" id="GO:0005737">
    <property type="term" value="C:cytoplasm"/>
    <property type="evidence" value="ECO:0007669"/>
    <property type="project" value="UniProtKB-SubCell"/>
</dbReference>
<dbReference type="GO" id="GO:0005615">
    <property type="term" value="C:extracellular space"/>
    <property type="evidence" value="ECO:0000318"/>
    <property type="project" value="GO_Central"/>
</dbReference>
<dbReference type="GO" id="GO:0030277">
    <property type="term" value="P:maintenance of gastrointestinal epithelium"/>
    <property type="evidence" value="ECO:0000318"/>
    <property type="project" value="GO_Central"/>
</dbReference>
<dbReference type="CDD" id="cd00111">
    <property type="entry name" value="Trefoil"/>
    <property type="match status" value="1"/>
</dbReference>
<dbReference type="FunFam" id="4.10.110.10:FF:000001">
    <property type="entry name" value="Trefoil factor 3"/>
    <property type="match status" value="1"/>
</dbReference>
<dbReference type="Gene3D" id="4.10.110.10">
    <property type="entry name" value="Spasmolytic Protein, domain 1"/>
    <property type="match status" value="1"/>
</dbReference>
<dbReference type="InterPro" id="IPR017994">
    <property type="entry name" value="P_trefoil_chordata"/>
</dbReference>
<dbReference type="InterPro" id="IPR017957">
    <property type="entry name" value="P_trefoil_CS"/>
</dbReference>
<dbReference type="InterPro" id="IPR000519">
    <property type="entry name" value="P_trefoil_dom"/>
</dbReference>
<dbReference type="InterPro" id="IPR044913">
    <property type="entry name" value="P_trefoil_dom_sf"/>
</dbReference>
<dbReference type="PANTHER" id="PTHR13826">
    <property type="entry name" value="INTESTINAL TREFOIL FACTOR-RELATED"/>
    <property type="match status" value="1"/>
</dbReference>
<dbReference type="PANTHER" id="PTHR13826:SF16">
    <property type="entry name" value="TREFOIL FACTOR 3"/>
    <property type="match status" value="1"/>
</dbReference>
<dbReference type="Pfam" id="PF00088">
    <property type="entry name" value="Trefoil"/>
    <property type="match status" value="1"/>
</dbReference>
<dbReference type="PRINTS" id="PR00680">
    <property type="entry name" value="PTREFOIL"/>
</dbReference>
<dbReference type="SMART" id="SM00018">
    <property type="entry name" value="PD"/>
    <property type="match status" value="1"/>
</dbReference>
<dbReference type="SUPFAM" id="SSF57492">
    <property type="entry name" value="Trefoil"/>
    <property type="match status" value="1"/>
</dbReference>
<dbReference type="PROSITE" id="PS00025">
    <property type="entry name" value="P_TREFOIL_1"/>
    <property type="match status" value="1"/>
</dbReference>
<dbReference type="PROSITE" id="PS51448">
    <property type="entry name" value="P_TREFOIL_2"/>
    <property type="match status" value="1"/>
</dbReference>
<keyword id="KW-0963">Cytoplasm</keyword>
<keyword id="KW-1015">Disulfide bond</keyword>
<keyword id="KW-0272">Extracellular matrix</keyword>
<keyword id="KW-1185">Reference proteome</keyword>
<keyword id="KW-0964">Secreted</keyword>
<keyword id="KW-0732">Signal</keyword>
<proteinExistence type="inferred from homology"/>
<name>TFF3_PIG</name>
<evidence type="ECO:0000250" key="1"/>
<evidence type="ECO:0000250" key="2">
    <source>
        <dbReference type="UniProtKB" id="Q07654"/>
    </source>
</evidence>
<evidence type="ECO:0000255" key="3"/>
<evidence type="ECO:0000255" key="4">
    <source>
        <dbReference type="PROSITE-ProRule" id="PRU00779"/>
    </source>
</evidence>
<accession>Q29183</accession>
<gene>
    <name type="primary">TFF3</name>
    <name type="synonym">ITF</name>
</gene>
<comment type="function">
    <text evidence="1">Involved in the maintenance and repair of the intestinal mucosa. Promotes the mobility of epithelial cells in healing processes (motogen) (By similarity).</text>
</comment>
<comment type="subunit">
    <text evidence="1">Monomer. Homodimer; disulfide-linked.</text>
</comment>
<comment type="subcellular location">
    <subcellularLocation>
        <location evidence="2">Secreted</location>
        <location evidence="2">Extracellular space</location>
        <location evidence="2">Extracellular matrix</location>
    </subcellularLocation>
    <subcellularLocation>
        <location evidence="2">Cytoplasm</location>
    </subcellularLocation>
</comment>